<keyword id="KW-0256">Endoplasmic reticulum</keyword>
<keyword id="KW-0275">Fatty acid biosynthesis</keyword>
<keyword id="KW-0276">Fatty acid metabolism</keyword>
<keyword id="KW-0444">Lipid biosynthesis</keyword>
<keyword id="KW-0443">Lipid metabolism</keyword>
<keyword id="KW-0472">Membrane</keyword>
<keyword id="KW-0521">NADP</keyword>
<keyword id="KW-0560">Oxidoreductase</keyword>
<keyword id="KW-1185">Reference proteome</keyword>
<keyword id="KW-0812">Transmembrane</keyword>
<keyword id="KW-1133">Transmembrane helix</keyword>
<proteinExistence type="inferred from homology"/>
<dbReference type="EC" id="1.1.1.330" evidence="4"/>
<dbReference type="EMBL" id="CP017630">
    <property type="protein sequence ID" value="AOW31318.1"/>
    <property type="status" value="ALT_INIT"/>
    <property type="molecule type" value="Genomic_DNA"/>
</dbReference>
<dbReference type="RefSeq" id="XP_713488.2">
    <property type="nucleotide sequence ID" value="XM_708395.2"/>
</dbReference>
<dbReference type="SMR" id="Q59V93"/>
<dbReference type="FunCoup" id="Q59V93">
    <property type="interactions" value="744"/>
</dbReference>
<dbReference type="STRING" id="237561.Q59V93"/>
<dbReference type="GeneID" id="3644840"/>
<dbReference type="KEGG" id="cal:CAALFM_CR06070WA"/>
<dbReference type="eggNOG" id="KOG1014">
    <property type="taxonomic scope" value="Eukaryota"/>
</dbReference>
<dbReference type="HOGENOM" id="CLU_010194_38_0_1"/>
<dbReference type="InParanoid" id="Q59V93"/>
<dbReference type="OrthoDB" id="5545019at2759"/>
<dbReference type="UniPathway" id="UPA00094"/>
<dbReference type="PRO" id="PR:Q59V93"/>
<dbReference type="Proteomes" id="UP000000559">
    <property type="component" value="Chromosome R"/>
</dbReference>
<dbReference type="GO" id="GO:0005783">
    <property type="term" value="C:endoplasmic reticulum"/>
    <property type="evidence" value="ECO:0000318"/>
    <property type="project" value="GO_Central"/>
</dbReference>
<dbReference type="GO" id="GO:0005789">
    <property type="term" value="C:endoplasmic reticulum membrane"/>
    <property type="evidence" value="ECO:0007669"/>
    <property type="project" value="UniProtKB-SubCell"/>
</dbReference>
<dbReference type="GO" id="GO:0045703">
    <property type="term" value="F:ketoreductase activity"/>
    <property type="evidence" value="ECO:0007669"/>
    <property type="project" value="UniProtKB-UniRule"/>
</dbReference>
<dbReference type="GO" id="GO:0141040">
    <property type="term" value="F:very-long-chain 3-oxoacyl-CoA reductase activity"/>
    <property type="evidence" value="ECO:0007669"/>
    <property type="project" value="UniProtKB-EC"/>
</dbReference>
<dbReference type="GO" id="GO:0030497">
    <property type="term" value="P:fatty acid elongation"/>
    <property type="evidence" value="ECO:0000318"/>
    <property type="project" value="GO_Central"/>
</dbReference>
<dbReference type="CDD" id="cd05356">
    <property type="entry name" value="17beta-HSD1_like_SDR_c"/>
    <property type="match status" value="1"/>
</dbReference>
<dbReference type="FunFam" id="3.40.50.720:FF:000317">
    <property type="entry name" value="Very-long-chain 3-oxoacyl-CoA reductase"/>
    <property type="match status" value="1"/>
</dbReference>
<dbReference type="Gene3D" id="3.40.50.720">
    <property type="entry name" value="NAD(P)-binding Rossmann-like Domain"/>
    <property type="match status" value="1"/>
</dbReference>
<dbReference type="HAMAP" id="MF_03107">
    <property type="entry name" value="3_ketoreductase"/>
    <property type="match status" value="1"/>
</dbReference>
<dbReference type="InterPro" id="IPR027533">
    <property type="entry name" value="3_ketoreductase_fungal"/>
</dbReference>
<dbReference type="InterPro" id="IPR036291">
    <property type="entry name" value="NAD(P)-bd_dom_sf"/>
</dbReference>
<dbReference type="InterPro" id="IPR020904">
    <property type="entry name" value="Sc_DH/Rdtase_CS"/>
</dbReference>
<dbReference type="InterPro" id="IPR002347">
    <property type="entry name" value="SDR_fam"/>
</dbReference>
<dbReference type="PANTHER" id="PTHR43086:SF2">
    <property type="entry name" value="HYDROXYSTEROID DEHYDROGENASE-LIKE PROTEIN 1"/>
    <property type="match status" value="1"/>
</dbReference>
<dbReference type="PANTHER" id="PTHR43086">
    <property type="entry name" value="VERY-LONG-CHAIN 3-OXOOACYL-COA REDUCTASE"/>
    <property type="match status" value="1"/>
</dbReference>
<dbReference type="Pfam" id="PF00106">
    <property type="entry name" value="adh_short"/>
    <property type="match status" value="1"/>
</dbReference>
<dbReference type="PIRSF" id="PIRSF000126">
    <property type="entry name" value="11-beta-HSD1"/>
    <property type="match status" value="1"/>
</dbReference>
<dbReference type="PRINTS" id="PR00081">
    <property type="entry name" value="GDHRDH"/>
</dbReference>
<dbReference type="SUPFAM" id="SSF51735">
    <property type="entry name" value="NAD(P)-binding Rossmann-fold domains"/>
    <property type="match status" value="1"/>
</dbReference>
<dbReference type="PROSITE" id="PS00061">
    <property type="entry name" value="ADH_SHORT"/>
    <property type="match status" value="1"/>
</dbReference>
<accession>Q59V93</accession>
<accession>A0A1D8PT52</accession>
<gene>
    <name type="ordered locus">CAALFM_CR06070WA</name>
    <name type="ORF">CaO19.11340</name>
    <name type="ORF">CaO19.3859</name>
</gene>
<comment type="function">
    <text evidence="4">Component of the microsomal membrane bound fatty acid elongation system, which produces the 26-carbon very long-chain fatty acids (VLCFA) from palmitate. Catalyzes the reduction of the 3-ketoacyl-CoA intermediate that is formed in each cycle of fatty acid elongation. VLCFAs serve as precursors for ceramide and sphingolipids.</text>
</comment>
<comment type="catalytic activity">
    <reaction evidence="4">
        <text>a very-long-chain (3R)-3-hydroxyacyl-CoA + NADP(+) = a very-long-chain 3-oxoacyl-CoA + NADPH + H(+)</text>
        <dbReference type="Rhea" id="RHEA:48680"/>
        <dbReference type="ChEBI" id="CHEBI:15378"/>
        <dbReference type="ChEBI" id="CHEBI:57783"/>
        <dbReference type="ChEBI" id="CHEBI:58349"/>
        <dbReference type="ChEBI" id="CHEBI:85440"/>
        <dbReference type="ChEBI" id="CHEBI:90725"/>
        <dbReference type="EC" id="1.1.1.330"/>
    </reaction>
</comment>
<comment type="pathway">
    <text evidence="3">Lipid metabolism; fatty acid biosynthesis.</text>
</comment>
<comment type="subcellular location">
    <subcellularLocation>
        <location evidence="4">Endoplasmic reticulum membrane</location>
        <topology evidence="4">Single-pass membrane protein</topology>
    </subcellularLocation>
</comment>
<comment type="similarity">
    <text evidence="4">Belongs to the short-chain dehydrogenases/reductases (SDR) family.</text>
</comment>
<comment type="sequence caution" evidence="5">
    <conflict type="erroneous initiation">
        <sequence resource="EMBL-CDS" id="AOW31318"/>
    </conflict>
    <text>Extended N-terminus.</text>
</comment>
<sequence>MPFTQFLDKYSDNLAIQYAIIFALLLGVFKLTVFSLKFASLIYDIFLAPATDFSKYGAASGKWAVVTGASDGIGKEYAFQLAKKGFSIVLVSRTQSKLELIATEIESKYKVNTKIVAFDASTDDEENYLKLEKAVFDLPVTILINNVGQSHSIPVPFLKTEKKELKDIITINTTATLRITQIVAPIIVSTVENPHPKQLRGLILTMGSFGGLLPTPYLATYSGSKSFLQAWSAALAGELQADHVDVELVISYLVASAMSKIKRTSLSIPNPKQFVTSTLNGVGRRNGAQERFATSTPYWTHALMHFAIDNTVGVYSKIANKLNLQMHQSIRRRALKKAARLAAAAEKKD</sequence>
<feature type="chain" id="PRO_0000357302" description="Very-long-chain 3-oxoacyl-CoA reductase">
    <location>
        <begin position="1"/>
        <end position="349"/>
    </location>
</feature>
<feature type="transmembrane region" description="Helical" evidence="4">
    <location>
        <begin position="19"/>
        <end position="39"/>
    </location>
</feature>
<feature type="active site" description="Proton donor" evidence="2">
    <location>
        <position position="221"/>
    </location>
</feature>
<feature type="active site" description="Lowers pKa of active site Tyr" evidence="2">
    <location>
        <position position="225"/>
    </location>
</feature>
<feature type="binding site" evidence="1">
    <location>
        <position position="65"/>
    </location>
    <ligand>
        <name>NADP(+)</name>
        <dbReference type="ChEBI" id="CHEBI:58349"/>
    </ligand>
</feature>
<feature type="binding site" evidence="1">
    <location>
        <position position="119"/>
    </location>
    <ligand>
        <name>NADP(+)</name>
        <dbReference type="ChEBI" id="CHEBI:58349"/>
    </ligand>
</feature>
<feature type="binding site" evidence="2">
    <location>
        <position position="146"/>
    </location>
    <ligand>
        <name>NADP(+)</name>
        <dbReference type="ChEBI" id="CHEBI:58349"/>
    </ligand>
</feature>
<feature type="binding site" evidence="2">
    <location>
        <position position="221"/>
    </location>
    <ligand>
        <name>NADP(+)</name>
        <dbReference type="ChEBI" id="CHEBI:58349"/>
    </ligand>
</feature>
<feature type="binding site" evidence="2">
    <location>
        <position position="225"/>
    </location>
    <ligand>
        <name>NADP(+)</name>
        <dbReference type="ChEBI" id="CHEBI:58349"/>
    </ligand>
</feature>
<feature type="binding site" evidence="2">
    <location>
        <position position="254"/>
    </location>
    <ligand>
        <name>NADP(+)</name>
        <dbReference type="ChEBI" id="CHEBI:58349"/>
    </ligand>
</feature>
<feature type="binding site" evidence="1">
    <location>
        <position position="256"/>
    </location>
    <ligand>
        <name>NADP(+)</name>
        <dbReference type="ChEBI" id="CHEBI:58349"/>
    </ligand>
</feature>
<organism>
    <name type="scientific">Candida albicans (strain SC5314 / ATCC MYA-2876)</name>
    <name type="common">Yeast</name>
    <dbReference type="NCBI Taxonomy" id="237561"/>
    <lineage>
        <taxon>Eukaryota</taxon>
        <taxon>Fungi</taxon>
        <taxon>Dikarya</taxon>
        <taxon>Ascomycota</taxon>
        <taxon>Saccharomycotina</taxon>
        <taxon>Pichiomycetes</taxon>
        <taxon>Debaryomycetaceae</taxon>
        <taxon>Candida/Lodderomyces clade</taxon>
        <taxon>Candida</taxon>
    </lineage>
</organism>
<protein>
    <recommendedName>
        <fullName evidence="4">Very-long-chain 3-oxoacyl-CoA reductase</fullName>
        <ecNumber evidence="4">1.1.1.330</ecNumber>
    </recommendedName>
    <alternativeName>
        <fullName evidence="4">3-ketoacyl-CoA reductase</fullName>
        <shortName evidence="4">3-ketoreductase</shortName>
        <shortName evidence="4">KAR</shortName>
    </alternativeName>
    <alternativeName>
        <fullName evidence="4">Microsomal beta-keto-reductase</fullName>
    </alternativeName>
</protein>
<evidence type="ECO:0000250" key="1">
    <source>
        <dbReference type="UniProtKB" id="L0E2Z4"/>
    </source>
</evidence>
<evidence type="ECO:0000250" key="2">
    <source>
        <dbReference type="UniProtKB" id="O93868"/>
    </source>
</evidence>
<evidence type="ECO:0000250" key="3">
    <source>
        <dbReference type="UniProtKB" id="P38286"/>
    </source>
</evidence>
<evidence type="ECO:0000255" key="4">
    <source>
        <dbReference type="HAMAP-Rule" id="MF_03107"/>
    </source>
</evidence>
<evidence type="ECO:0000305" key="5"/>
<name>MKAR_CANAL</name>
<reference key="1">
    <citation type="journal article" date="2004" name="Proc. Natl. Acad. Sci. U.S.A.">
        <title>The diploid genome sequence of Candida albicans.</title>
        <authorList>
            <person name="Jones T."/>
            <person name="Federspiel N.A."/>
            <person name="Chibana H."/>
            <person name="Dungan J."/>
            <person name="Kalman S."/>
            <person name="Magee B.B."/>
            <person name="Newport G."/>
            <person name="Thorstenson Y.R."/>
            <person name="Agabian N."/>
            <person name="Magee P.T."/>
            <person name="Davis R.W."/>
            <person name="Scherer S."/>
        </authorList>
    </citation>
    <scope>NUCLEOTIDE SEQUENCE [LARGE SCALE GENOMIC DNA]</scope>
    <source>
        <strain>SC5314 / ATCC MYA-2876</strain>
    </source>
</reference>
<reference key="2">
    <citation type="journal article" date="2007" name="Genome Biol.">
        <title>Assembly of the Candida albicans genome into sixteen supercontigs aligned on the eight chromosomes.</title>
        <authorList>
            <person name="van het Hoog M."/>
            <person name="Rast T.J."/>
            <person name="Martchenko M."/>
            <person name="Grindle S."/>
            <person name="Dignard D."/>
            <person name="Hogues H."/>
            <person name="Cuomo C."/>
            <person name="Berriman M."/>
            <person name="Scherer S."/>
            <person name="Magee B.B."/>
            <person name="Whiteway M."/>
            <person name="Chibana H."/>
            <person name="Nantel A."/>
            <person name="Magee P.T."/>
        </authorList>
    </citation>
    <scope>GENOME REANNOTATION</scope>
    <source>
        <strain>SC5314 / ATCC MYA-2876</strain>
    </source>
</reference>
<reference key="3">
    <citation type="journal article" date="2013" name="Genome Biol.">
        <title>Assembly of a phased diploid Candida albicans genome facilitates allele-specific measurements and provides a simple model for repeat and indel structure.</title>
        <authorList>
            <person name="Muzzey D."/>
            <person name="Schwartz K."/>
            <person name="Weissman J.S."/>
            <person name="Sherlock G."/>
        </authorList>
    </citation>
    <scope>NUCLEOTIDE SEQUENCE [LARGE SCALE GENOMIC DNA]</scope>
    <scope>GENOME REANNOTATION</scope>
    <source>
        <strain>SC5314 / ATCC MYA-2876</strain>
    </source>
</reference>